<name>SECM_YERPA</name>
<comment type="function">
    <text evidence="1">Regulates secA expression by translational coupling of the secM secA operon. Translational pausing at a specific Pro residue 5 residues before the end of the protein may allow disruption of a mRNA repressor helix that normally suppresses secA translation initiation.</text>
</comment>
<comment type="subcellular location">
    <subcellularLocation>
        <location evidence="1">Cytoplasm</location>
        <location evidence="1">Cytosol</location>
    </subcellularLocation>
    <subcellularLocation>
        <location evidence="1">Periplasm</location>
    </subcellularLocation>
    <text evidence="1">The active form is cytosolic, while the periplasmic form is rapidly degraded, mainly by the tail-specific protease.</text>
</comment>
<comment type="similarity">
    <text evidence="1">Belongs to the SecM family.</text>
</comment>
<proteinExistence type="inferred from homology"/>
<keyword id="KW-0963">Cytoplasm</keyword>
<keyword id="KW-0574">Periplasm</keyword>
<keyword id="KW-0732">Signal</keyword>
<protein>
    <recommendedName>
        <fullName evidence="1">Secretion monitor</fullName>
    </recommendedName>
</protein>
<evidence type="ECO:0000255" key="1">
    <source>
        <dbReference type="HAMAP-Rule" id="MF_01332"/>
    </source>
</evidence>
<organism>
    <name type="scientific">Yersinia pestis bv. Antiqua (strain Antiqua)</name>
    <dbReference type="NCBI Taxonomy" id="360102"/>
    <lineage>
        <taxon>Bacteria</taxon>
        <taxon>Pseudomonadati</taxon>
        <taxon>Pseudomonadota</taxon>
        <taxon>Gammaproteobacteria</taxon>
        <taxon>Enterobacterales</taxon>
        <taxon>Yersiniaceae</taxon>
        <taxon>Yersinia</taxon>
    </lineage>
</organism>
<feature type="signal peptide" evidence="1">
    <location>
        <begin position="1"/>
        <end position="37"/>
    </location>
</feature>
<feature type="chain" id="PRO_5000116286" description="Secretion monitor">
    <location>
        <begin position="38"/>
        <end position="177"/>
    </location>
</feature>
<sequence length="177" mass="19847">MIGILNRWRQFGRRYFWPHLLLGMVAASLGVPLNLSGVPDHAALANTSSSQSRQNHGTTNFNSLALLHDIHRRLSFSVDYWQQHALRTVIRHLSFALAPQAAYARVQEVAETERVAPSKIQQLALLDTLNALLTHEFKPPAIIRYTEQVERPVLSPYKPGLWLAQVQGIRAGPANLS</sequence>
<reference key="1">
    <citation type="journal article" date="2006" name="J. Bacteriol.">
        <title>Complete genome sequence of Yersinia pestis strains Antiqua and Nepal516: evidence of gene reduction in an emerging pathogen.</title>
        <authorList>
            <person name="Chain P.S.G."/>
            <person name="Hu P."/>
            <person name="Malfatti S.A."/>
            <person name="Radnedge L."/>
            <person name="Larimer F."/>
            <person name="Vergez L.M."/>
            <person name="Worsham P."/>
            <person name="Chu M.C."/>
            <person name="Andersen G.L."/>
        </authorList>
    </citation>
    <scope>NUCLEOTIDE SEQUENCE [LARGE SCALE GENOMIC DNA]</scope>
    <source>
        <strain>Antiqua</strain>
    </source>
</reference>
<gene>
    <name evidence="1" type="primary">secM</name>
    <name type="ordered locus">YPA_3538</name>
</gene>
<dbReference type="EMBL" id="CP000308">
    <property type="protein sequence ID" value="ABG15500.1"/>
    <property type="molecule type" value="Genomic_DNA"/>
</dbReference>
<dbReference type="RefSeq" id="WP_002210427.1">
    <property type="nucleotide sequence ID" value="NZ_CP009906.1"/>
</dbReference>
<dbReference type="GeneID" id="57974052"/>
<dbReference type="KEGG" id="ypa:YPA_3538"/>
<dbReference type="Proteomes" id="UP000001971">
    <property type="component" value="Chromosome"/>
</dbReference>
<dbReference type="GO" id="GO:0005829">
    <property type="term" value="C:cytosol"/>
    <property type="evidence" value="ECO:0007669"/>
    <property type="project" value="UniProtKB-SubCell"/>
</dbReference>
<dbReference type="GO" id="GO:0042597">
    <property type="term" value="C:periplasmic space"/>
    <property type="evidence" value="ECO:0007669"/>
    <property type="project" value="UniProtKB-SubCell"/>
</dbReference>
<dbReference type="GO" id="GO:0045182">
    <property type="term" value="F:translation regulator activity"/>
    <property type="evidence" value="ECO:0007669"/>
    <property type="project" value="InterPro"/>
</dbReference>
<dbReference type="HAMAP" id="MF_01332">
    <property type="entry name" value="SecM"/>
    <property type="match status" value="1"/>
</dbReference>
<dbReference type="InterPro" id="IPR009502">
    <property type="entry name" value="SecM"/>
</dbReference>
<dbReference type="NCBIfam" id="NF002799">
    <property type="entry name" value="PRK02943.1-1"/>
    <property type="match status" value="1"/>
</dbReference>
<dbReference type="Pfam" id="PF06558">
    <property type="entry name" value="SecM"/>
    <property type="match status" value="1"/>
</dbReference>
<dbReference type="PIRSF" id="PIRSF004572">
    <property type="entry name" value="SecM"/>
    <property type="match status" value="1"/>
</dbReference>
<accession>Q1C222</accession>